<reference key="1">
    <citation type="journal article" date="2008" name="J. Bacteriol.">
        <title>Complete genome sequence of the mosquitocidal bacterium Bacillus sphaericus C3-41 and comparison with those of closely related Bacillus species.</title>
        <authorList>
            <person name="Hu X."/>
            <person name="Fan W."/>
            <person name="Han B."/>
            <person name="Liu H."/>
            <person name="Zheng D."/>
            <person name="Li Q."/>
            <person name="Dong W."/>
            <person name="Yan J."/>
            <person name="Gao M."/>
            <person name="Berry C."/>
            <person name="Yuan Z."/>
        </authorList>
    </citation>
    <scope>NUCLEOTIDE SEQUENCE [LARGE SCALE GENOMIC DNA]</scope>
    <source>
        <strain>C3-41</strain>
    </source>
</reference>
<organism>
    <name type="scientific">Lysinibacillus sphaericus (strain C3-41)</name>
    <dbReference type="NCBI Taxonomy" id="444177"/>
    <lineage>
        <taxon>Bacteria</taxon>
        <taxon>Bacillati</taxon>
        <taxon>Bacillota</taxon>
        <taxon>Bacilli</taxon>
        <taxon>Bacillales</taxon>
        <taxon>Bacillaceae</taxon>
        <taxon>Lysinibacillus</taxon>
    </lineage>
</organism>
<name>MNTR_LYSSC</name>
<proteinExistence type="inferred from homology"/>
<accession>B1HYR5</accession>
<feature type="chain" id="PRO_1000132747" description="HTH-type transcriptional regulator MntR">
    <location>
        <begin position="1"/>
        <end position="139"/>
    </location>
</feature>
<feature type="domain" description="HTH dtxR-type" evidence="1">
    <location>
        <begin position="1"/>
        <end position="63"/>
    </location>
</feature>
<feature type="binding site" evidence="1">
    <location>
        <position position="8"/>
    </location>
    <ligand>
        <name>Mn(2+)</name>
        <dbReference type="ChEBI" id="CHEBI:29035"/>
        <label>1</label>
    </ligand>
</feature>
<feature type="binding site" evidence="1">
    <location>
        <position position="11"/>
    </location>
    <ligand>
        <name>Mn(2+)</name>
        <dbReference type="ChEBI" id="CHEBI:29035"/>
        <label>2</label>
    </ligand>
</feature>
<feature type="binding site" evidence="1">
    <location>
        <position position="77"/>
    </location>
    <ligand>
        <name>Mn(2+)</name>
        <dbReference type="ChEBI" id="CHEBI:29035"/>
        <label>2</label>
    </ligand>
</feature>
<feature type="binding site" evidence="1">
    <location>
        <position position="99"/>
    </location>
    <ligand>
        <name>Mn(2+)</name>
        <dbReference type="ChEBI" id="CHEBI:29035"/>
        <label>1</label>
    </ligand>
</feature>
<feature type="binding site" evidence="1">
    <location>
        <position position="99"/>
    </location>
    <ligand>
        <name>Mn(2+)</name>
        <dbReference type="ChEBI" id="CHEBI:29035"/>
        <label>2</label>
    </ligand>
</feature>
<feature type="binding site" evidence="1">
    <location>
        <position position="102"/>
    </location>
    <ligand>
        <name>Mn(2+)</name>
        <dbReference type="ChEBI" id="CHEBI:29035"/>
        <label>1</label>
    </ligand>
</feature>
<feature type="binding site" evidence="1">
    <location>
        <position position="102"/>
    </location>
    <ligand>
        <name>Mn(2+)</name>
        <dbReference type="ChEBI" id="CHEBI:29035"/>
        <label>2</label>
    </ligand>
</feature>
<feature type="binding site" evidence="1">
    <location>
        <position position="103"/>
    </location>
    <ligand>
        <name>Mn(2+)</name>
        <dbReference type="ChEBI" id="CHEBI:29035"/>
        <label>1</label>
    </ligand>
</feature>
<gene>
    <name evidence="1" type="primary">mntR</name>
    <name type="ordered locus">Bsph_4331</name>
</gene>
<sequence>MPTPSMEDHIEQIYLLIANKGYARVSDIAEALSVLPSSVTKMVQKLDKDGYLVYEKYRGLTLTPKGEKLGKRLVQRHELLEQFLRMIGVDEERIYNDVEGIEHHLSWNSIDRIADLVQVMEENPDIVKKLEASKTQHNL</sequence>
<protein>
    <recommendedName>
        <fullName evidence="1">HTH-type transcriptional regulator MntR</fullName>
    </recommendedName>
    <alternativeName>
        <fullName evidence="1">Manganese transport regulator</fullName>
    </alternativeName>
</protein>
<keyword id="KW-0010">Activator</keyword>
<keyword id="KW-0963">Cytoplasm</keyword>
<keyword id="KW-0238">DNA-binding</keyword>
<keyword id="KW-0464">Manganese</keyword>
<keyword id="KW-0479">Metal-binding</keyword>
<keyword id="KW-0678">Repressor</keyword>
<keyword id="KW-0804">Transcription</keyword>
<keyword id="KW-0805">Transcription regulation</keyword>
<comment type="function">
    <text evidence="1">Central regulator of manganese homeostasis.</text>
</comment>
<comment type="activity regulation">
    <text evidence="1">DNA binding is strongly activated by Mn(2+).</text>
</comment>
<comment type="subunit">
    <text evidence="1">Homodimer.</text>
</comment>
<comment type="subcellular location">
    <subcellularLocation>
        <location evidence="1">Cytoplasm</location>
    </subcellularLocation>
</comment>
<comment type="similarity">
    <text evidence="1">Belongs to the DtxR/MntR family.</text>
</comment>
<evidence type="ECO:0000255" key="1">
    <source>
        <dbReference type="HAMAP-Rule" id="MF_00732"/>
    </source>
</evidence>
<dbReference type="EMBL" id="CP000817">
    <property type="protein sequence ID" value="ACA41788.1"/>
    <property type="molecule type" value="Genomic_DNA"/>
</dbReference>
<dbReference type="RefSeq" id="WP_008177112.1">
    <property type="nucleotide sequence ID" value="NC_010382.1"/>
</dbReference>
<dbReference type="SMR" id="B1HYR5"/>
<dbReference type="EnsemblBacteria" id="ACA41788">
    <property type="protein sequence ID" value="ACA41788"/>
    <property type="gene ID" value="Bsph_4331"/>
</dbReference>
<dbReference type="GeneID" id="29439256"/>
<dbReference type="KEGG" id="lsp:Bsph_4331"/>
<dbReference type="HOGENOM" id="CLU_069532_3_0_9"/>
<dbReference type="Proteomes" id="UP000002164">
    <property type="component" value="Chromosome"/>
</dbReference>
<dbReference type="GO" id="GO:0005737">
    <property type="term" value="C:cytoplasm"/>
    <property type="evidence" value="ECO:0007669"/>
    <property type="project" value="UniProtKB-SubCell"/>
</dbReference>
<dbReference type="GO" id="GO:0003677">
    <property type="term" value="F:DNA binding"/>
    <property type="evidence" value="ECO:0007669"/>
    <property type="project" value="UniProtKB-KW"/>
</dbReference>
<dbReference type="GO" id="GO:0003700">
    <property type="term" value="F:DNA-binding transcription factor activity"/>
    <property type="evidence" value="ECO:0007669"/>
    <property type="project" value="UniProtKB-UniRule"/>
</dbReference>
<dbReference type="GO" id="GO:0030145">
    <property type="term" value="F:manganese ion binding"/>
    <property type="evidence" value="ECO:0007669"/>
    <property type="project" value="UniProtKB-UniRule"/>
</dbReference>
<dbReference type="GO" id="GO:0046983">
    <property type="term" value="F:protein dimerization activity"/>
    <property type="evidence" value="ECO:0007669"/>
    <property type="project" value="InterPro"/>
</dbReference>
<dbReference type="GO" id="GO:0030026">
    <property type="term" value="P:intracellular manganese ion homeostasis"/>
    <property type="evidence" value="ECO:0007669"/>
    <property type="project" value="UniProtKB-UniRule"/>
</dbReference>
<dbReference type="FunFam" id="1.10.10.10:FF:000189">
    <property type="entry name" value="HTH-type transcriptional regulator MntR"/>
    <property type="match status" value="1"/>
</dbReference>
<dbReference type="Gene3D" id="1.10.60.10">
    <property type="entry name" value="Iron dependent repressor, metal binding and dimerisation domain"/>
    <property type="match status" value="1"/>
</dbReference>
<dbReference type="Gene3D" id="1.10.10.10">
    <property type="entry name" value="Winged helix-like DNA-binding domain superfamily/Winged helix DNA-binding domain"/>
    <property type="match status" value="1"/>
</dbReference>
<dbReference type="HAMAP" id="MF_00732">
    <property type="entry name" value="HTH_MntR"/>
    <property type="match status" value="1"/>
</dbReference>
<dbReference type="InterPro" id="IPR050536">
    <property type="entry name" value="DtxR_MntR_Metal-Reg"/>
</dbReference>
<dbReference type="InterPro" id="IPR001367">
    <property type="entry name" value="Fe_dep_repressor"/>
</dbReference>
<dbReference type="InterPro" id="IPR036421">
    <property type="entry name" value="Fe_dep_repressor_sf"/>
</dbReference>
<dbReference type="InterPro" id="IPR022687">
    <property type="entry name" value="HTH_DTXR"/>
</dbReference>
<dbReference type="InterPro" id="IPR022897">
    <property type="entry name" value="HTH_tscrpt_reg_MntR"/>
</dbReference>
<dbReference type="InterPro" id="IPR022689">
    <property type="entry name" value="Iron_dep_repressor"/>
</dbReference>
<dbReference type="InterPro" id="IPR036388">
    <property type="entry name" value="WH-like_DNA-bd_sf"/>
</dbReference>
<dbReference type="InterPro" id="IPR036390">
    <property type="entry name" value="WH_DNA-bd_sf"/>
</dbReference>
<dbReference type="NCBIfam" id="NF003025">
    <property type="entry name" value="PRK03902.1"/>
    <property type="match status" value="1"/>
</dbReference>
<dbReference type="PANTHER" id="PTHR33238">
    <property type="entry name" value="IRON (METAL) DEPENDENT REPRESSOR, DTXR FAMILY"/>
    <property type="match status" value="1"/>
</dbReference>
<dbReference type="PANTHER" id="PTHR33238:SF11">
    <property type="entry name" value="TRANSCRIPTIONAL REGULATOR MNTR"/>
    <property type="match status" value="1"/>
</dbReference>
<dbReference type="Pfam" id="PF02742">
    <property type="entry name" value="Fe_dep_repr_C"/>
    <property type="match status" value="1"/>
</dbReference>
<dbReference type="Pfam" id="PF01325">
    <property type="entry name" value="Fe_dep_repress"/>
    <property type="match status" value="1"/>
</dbReference>
<dbReference type="SMART" id="SM00529">
    <property type="entry name" value="HTH_DTXR"/>
    <property type="match status" value="1"/>
</dbReference>
<dbReference type="SUPFAM" id="SSF47979">
    <property type="entry name" value="Iron-dependent repressor protein, dimerization domain"/>
    <property type="match status" value="1"/>
</dbReference>
<dbReference type="SUPFAM" id="SSF46785">
    <property type="entry name" value="Winged helix' DNA-binding domain"/>
    <property type="match status" value="1"/>
</dbReference>
<dbReference type="PROSITE" id="PS50944">
    <property type="entry name" value="HTH_DTXR"/>
    <property type="match status" value="1"/>
</dbReference>